<feature type="chain" id="PRO_1000148625" description="ATP synthase gamma chain">
    <location>
        <begin position="1"/>
        <end position="288"/>
    </location>
</feature>
<sequence>MASLRDIKGRINSTKKTSQITKAMHMVSNSKLRRAEENAKSFYPYMEKMQDAVTAIGGSNSDANHPMLQKRPVKKTGYLVITCDKGLAGPYNANILKSVTQKIQERHNNNPAEYGILVIGRVGYDFLRARDYNVEGQIIGLSDQPSFKSIKDISHTAVSRFETGEYDELYMHYSHFISVLEQEVHERKILPISKEEVSGESKLSNYEFEPDKDAILEVILPQYAESLIYGAILDGKASEHASRMTAMKNATDNAKELIDDLSLQYNRARQAAITQQITEIVGGAAALE</sequence>
<dbReference type="EMBL" id="AP009484">
    <property type="protein sequence ID" value="BAH18465.1"/>
    <property type="molecule type" value="Genomic_DNA"/>
</dbReference>
<dbReference type="RefSeq" id="WP_015912257.1">
    <property type="nucleotide sequence ID" value="NC_011999.1"/>
</dbReference>
<dbReference type="SMR" id="B9E8E7"/>
<dbReference type="STRING" id="458233.MCCL_1758"/>
<dbReference type="GeneID" id="61130137"/>
<dbReference type="KEGG" id="mcl:MCCL_1758"/>
<dbReference type="eggNOG" id="COG0224">
    <property type="taxonomic scope" value="Bacteria"/>
</dbReference>
<dbReference type="HOGENOM" id="CLU_050669_0_1_9"/>
<dbReference type="OrthoDB" id="9812769at2"/>
<dbReference type="Proteomes" id="UP000001383">
    <property type="component" value="Chromosome"/>
</dbReference>
<dbReference type="GO" id="GO:0005886">
    <property type="term" value="C:plasma membrane"/>
    <property type="evidence" value="ECO:0007669"/>
    <property type="project" value="UniProtKB-SubCell"/>
</dbReference>
<dbReference type="GO" id="GO:0045259">
    <property type="term" value="C:proton-transporting ATP synthase complex"/>
    <property type="evidence" value="ECO:0007669"/>
    <property type="project" value="UniProtKB-KW"/>
</dbReference>
<dbReference type="GO" id="GO:0005524">
    <property type="term" value="F:ATP binding"/>
    <property type="evidence" value="ECO:0007669"/>
    <property type="project" value="UniProtKB-UniRule"/>
</dbReference>
<dbReference type="GO" id="GO:0046933">
    <property type="term" value="F:proton-transporting ATP synthase activity, rotational mechanism"/>
    <property type="evidence" value="ECO:0007669"/>
    <property type="project" value="UniProtKB-UniRule"/>
</dbReference>
<dbReference type="GO" id="GO:0042777">
    <property type="term" value="P:proton motive force-driven plasma membrane ATP synthesis"/>
    <property type="evidence" value="ECO:0007669"/>
    <property type="project" value="UniProtKB-UniRule"/>
</dbReference>
<dbReference type="CDD" id="cd12151">
    <property type="entry name" value="F1-ATPase_gamma"/>
    <property type="match status" value="1"/>
</dbReference>
<dbReference type="FunFam" id="1.10.287.80:FF:000019">
    <property type="entry name" value="ATP synthase gamma chain"/>
    <property type="match status" value="1"/>
</dbReference>
<dbReference type="FunFam" id="3.40.1380.10:FF:000002">
    <property type="entry name" value="ATP synthase gamma chain"/>
    <property type="match status" value="1"/>
</dbReference>
<dbReference type="Gene3D" id="3.40.1380.10">
    <property type="match status" value="1"/>
</dbReference>
<dbReference type="Gene3D" id="1.10.287.80">
    <property type="entry name" value="ATP synthase, gamma subunit, helix hairpin domain"/>
    <property type="match status" value="1"/>
</dbReference>
<dbReference type="HAMAP" id="MF_00815">
    <property type="entry name" value="ATP_synth_gamma_bact"/>
    <property type="match status" value="1"/>
</dbReference>
<dbReference type="InterPro" id="IPR035968">
    <property type="entry name" value="ATP_synth_F1_ATPase_gsu"/>
</dbReference>
<dbReference type="InterPro" id="IPR000131">
    <property type="entry name" value="ATP_synth_F1_gsu"/>
</dbReference>
<dbReference type="NCBIfam" id="TIGR01146">
    <property type="entry name" value="ATPsyn_F1gamma"/>
    <property type="match status" value="1"/>
</dbReference>
<dbReference type="PANTHER" id="PTHR11693">
    <property type="entry name" value="ATP SYNTHASE GAMMA CHAIN"/>
    <property type="match status" value="1"/>
</dbReference>
<dbReference type="PANTHER" id="PTHR11693:SF22">
    <property type="entry name" value="ATP SYNTHASE SUBUNIT GAMMA, MITOCHONDRIAL"/>
    <property type="match status" value="1"/>
</dbReference>
<dbReference type="Pfam" id="PF00231">
    <property type="entry name" value="ATP-synt"/>
    <property type="match status" value="1"/>
</dbReference>
<dbReference type="PRINTS" id="PR00126">
    <property type="entry name" value="ATPASEGAMMA"/>
</dbReference>
<dbReference type="SUPFAM" id="SSF52943">
    <property type="entry name" value="ATP synthase (F1-ATPase), gamma subunit"/>
    <property type="match status" value="1"/>
</dbReference>
<reference key="1">
    <citation type="journal article" date="2009" name="J. Bacteriol.">
        <title>Complete genome sequence of Macrococcus caseolyticus strain JCSCS5402, reflecting the ancestral genome of the human-pathogenic staphylococci.</title>
        <authorList>
            <person name="Baba T."/>
            <person name="Kuwahara-Arai K."/>
            <person name="Uchiyama I."/>
            <person name="Takeuchi F."/>
            <person name="Ito T."/>
            <person name="Hiramatsu K."/>
        </authorList>
    </citation>
    <scope>NUCLEOTIDE SEQUENCE [LARGE SCALE GENOMIC DNA]</scope>
    <source>
        <strain>JCSC5402</strain>
    </source>
</reference>
<evidence type="ECO:0000255" key="1">
    <source>
        <dbReference type="HAMAP-Rule" id="MF_00815"/>
    </source>
</evidence>
<proteinExistence type="inferred from homology"/>
<comment type="function">
    <text evidence="1">Produces ATP from ADP in the presence of a proton gradient across the membrane. The gamma chain is believed to be important in regulating ATPase activity and the flow of protons through the CF(0) complex.</text>
</comment>
<comment type="subunit">
    <text evidence="1">F-type ATPases have 2 components, CF(1) - the catalytic core - and CF(0) - the membrane proton channel. CF(1) has five subunits: alpha(3), beta(3), gamma(1), delta(1), epsilon(1). CF(0) has three main subunits: a, b and c.</text>
</comment>
<comment type="subcellular location">
    <subcellularLocation>
        <location evidence="1">Cell membrane</location>
        <topology evidence="1">Peripheral membrane protein</topology>
    </subcellularLocation>
</comment>
<comment type="similarity">
    <text evidence="1">Belongs to the ATPase gamma chain family.</text>
</comment>
<gene>
    <name evidence="1" type="primary">atpG</name>
    <name type="ordered locus">MCCL_1758</name>
</gene>
<name>ATPG_MACCJ</name>
<protein>
    <recommendedName>
        <fullName evidence="1">ATP synthase gamma chain</fullName>
    </recommendedName>
    <alternativeName>
        <fullName evidence="1">ATP synthase F1 sector gamma subunit</fullName>
    </alternativeName>
    <alternativeName>
        <fullName evidence="1">F-ATPase gamma subunit</fullName>
    </alternativeName>
</protein>
<organism>
    <name type="scientific">Macrococcus caseolyticus (strain JCSC5402)</name>
    <name type="common">Macrococcoides caseolyticum</name>
    <dbReference type="NCBI Taxonomy" id="458233"/>
    <lineage>
        <taxon>Bacteria</taxon>
        <taxon>Bacillati</taxon>
        <taxon>Bacillota</taxon>
        <taxon>Bacilli</taxon>
        <taxon>Bacillales</taxon>
        <taxon>Staphylococcaceae</taxon>
        <taxon>Macrococcoides</taxon>
    </lineage>
</organism>
<accession>B9E8E7</accession>
<keyword id="KW-0066">ATP synthesis</keyword>
<keyword id="KW-1003">Cell membrane</keyword>
<keyword id="KW-0139">CF(1)</keyword>
<keyword id="KW-0375">Hydrogen ion transport</keyword>
<keyword id="KW-0406">Ion transport</keyword>
<keyword id="KW-0472">Membrane</keyword>
<keyword id="KW-1185">Reference proteome</keyword>
<keyword id="KW-0813">Transport</keyword>